<evidence type="ECO:0000255" key="1">
    <source>
        <dbReference type="HAMAP-Rule" id="MF_00537"/>
    </source>
</evidence>
<evidence type="ECO:0000305" key="2"/>
<keyword id="KW-1185">Reference proteome</keyword>
<keyword id="KW-0687">Ribonucleoprotein</keyword>
<keyword id="KW-0689">Ribosomal protein</keyword>
<keyword id="KW-0694">RNA-binding</keyword>
<keyword id="KW-0699">rRNA-binding</keyword>
<dbReference type="EMBL" id="CP000435">
    <property type="protein sequence ID" value="ABI45663.1"/>
    <property type="molecule type" value="Genomic_DNA"/>
</dbReference>
<dbReference type="RefSeq" id="WP_011620003.1">
    <property type="nucleotide sequence ID" value="NC_008319.1"/>
</dbReference>
<dbReference type="SMR" id="Q0I8D1"/>
<dbReference type="STRING" id="64471.sync_2089"/>
<dbReference type="KEGG" id="syg:sync_2089"/>
<dbReference type="eggNOG" id="COG0199">
    <property type="taxonomic scope" value="Bacteria"/>
</dbReference>
<dbReference type="HOGENOM" id="CLU_139869_0_1_3"/>
<dbReference type="OrthoDB" id="9810484at2"/>
<dbReference type="Proteomes" id="UP000001961">
    <property type="component" value="Chromosome"/>
</dbReference>
<dbReference type="GO" id="GO:0005737">
    <property type="term" value="C:cytoplasm"/>
    <property type="evidence" value="ECO:0007669"/>
    <property type="project" value="UniProtKB-ARBA"/>
</dbReference>
<dbReference type="GO" id="GO:0015935">
    <property type="term" value="C:small ribosomal subunit"/>
    <property type="evidence" value="ECO:0007669"/>
    <property type="project" value="TreeGrafter"/>
</dbReference>
<dbReference type="GO" id="GO:0019843">
    <property type="term" value="F:rRNA binding"/>
    <property type="evidence" value="ECO:0007669"/>
    <property type="project" value="UniProtKB-UniRule"/>
</dbReference>
<dbReference type="GO" id="GO:0003735">
    <property type="term" value="F:structural constituent of ribosome"/>
    <property type="evidence" value="ECO:0007669"/>
    <property type="project" value="InterPro"/>
</dbReference>
<dbReference type="GO" id="GO:0006412">
    <property type="term" value="P:translation"/>
    <property type="evidence" value="ECO:0007669"/>
    <property type="project" value="UniProtKB-UniRule"/>
</dbReference>
<dbReference type="FunFam" id="1.10.287.1480:FF:000001">
    <property type="entry name" value="30S ribosomal protein S14"/>
    <property type="match status" value="1"/>
</dbReference>
<dbReference type="Gene3D" id="1.10.287.1480">
    <property type="match status" value="1"/>
</dbReference>
<dbReference type="HAMAP" id="MF_00537">
    <property type="entry name" value="Ribosomal_uS14_1"/>
    <property type="match status" value="1"/>
</dbReference>
<dbReference type="InterPro" id="IPR001209">
    <property type="entry name" value="Ribosomal_uS14"/>
</dbReference>
<dbReference type="InterPro" id="IPR023036">
    <property type="entry name" value="Ribosomal_uS14_bac/plastid"/>
</dbReference>
<dbReference type="InterPro" id="IPR018271">
    <property type="entry name" value="Ribosomal_uS14_CS"/>
</dbReference>
<dbReference type="NCBIfam" id="NF006477">
    <property type="entry name" value="PRK08881.1"/>
    <property type="match status" value="1"/>
</dbReference>
<dbReference type="PANTHER" id="PTHR19836">
    <property type="entry name" value="30S RIBOSOMAL PROTEIN S14"/>
    <property type="match status" value="1"/>
</dbReference>
<dbReference type="PANTHER" id="PTHR19836:SF19">
    <property type="entry name" value="SMALL RIBOSOMAL SUBUNIT PROTEIN US14M"/>
    <property type="match status" value="1"/>
</dbReference>
<dbReference type="Pfam" id="PF00253">
    <property type="entry name" value="Ribosomal_S14"/>
    <property type="match status" value="1"/>
</dbReference>
<dbReference type="SUPFAM" id="SSF57716">
    <property type="entry name" value="Glucocorticoid receptor-like (DNA-binding domain)"/>
    <property type="match status" value="1"/>
</dbReference>
<dbReference type="PROSITE" id="PS00527">
    <property type="entry name" value="RIBOSOMAL_S14"/>
    <property type="match status" value="1"/>
</dbReference>
<proteinExistence type="inferred from homology"/>
<comment type="function">
    <text evidence="1">Binds 16S rRNA, required for the assembly of 30S particles and may also be responsible for determining the conformation of the 16S rRNA at the A site.</text>
</comment>
<comment type="subunit">
    <text evidence="1">Part of the 30S ribosomal subunit. Contacts proteins S3 and S10.</text>
</comment>
<comment type="similarity">
    <text evidence="1">Belongs to the universal ribosomal protein uS14 family.</text>
</comment>
<name>RS14_SYNS3</name>
<reference key="1">
    <citation type="journal article" date="2006" name="Proc. Natl. Acad. Sci. U.S.A.">
        <title>Genome sequence of Synechococcus CC9311: insights into adaptation to a coastal environment.</title>
        <authorList>
            <person name="Palenik B."/>
            <person name="Ren Q."/>
            <person name="Dupont C.L."/>
            <person name="Myers G.S."/>
            <person name="Heidelberg J.F."/>
            <person name="Badger J.H."/>
            <person name="Madupu R."/>
            <person name="Nelson W.C."/>
            <person name="Brinkac L.M."/>
            <person name="Dodson R.J."/>
            <person name="Durkin A.S."/>
            <person name="Daugherty S.C."/>
            <person name="Sullivan S.A."/>
            <person name="Khouri H."/>
            <person name="Mohamoud Y."/>
            <person name="Halpin R."/>
            <person name="Paulsen I.T."/>
        </authorList>
    </citation>
    <scope>NUCLEOTIDE SEQUENCE [LARGE SCALE GENOMIC DNA]</scope>
    <source>
        <strain>CC9311</strain>
    </source>
</reference>
<organism>
    <name type="scientific">Synechococcus sp. (strain CC9311)</name>
    <dbReference type="NCBI Taxonomy" id="64471"/>
    <lineage>
        <taxon>Bacteria</taxon>
        <taxon>Bacillati</taxon>
        <taxon>Cyanobacteriota</taxon>
        <taxon>Cyanophyceae</taxon>
        <taxon>Synechococcales</taxon>
        <taxon>Synechococcaceae</taxon>
        <taxon>Synechococcus</taxon>
    </lineage>
</organism>
<feature type="chain" id="PRO_1000128617" description="Small ribosomal subunit protein uS14">
    <location>
        <begin position="1"/>
        <end position="100"/>
    </location>
</feature>
<sequence length="100" mass="11628">MAKKSMIARDVKRKKMVERFSDRRAALMAAFHAAKDPMERLEIHRKIQGLPRNSAPNRVRNRCWATGKPRGVYRDFGLCRNQLRERAHKGELPGVVKSSW</sequence>
<accession>Q0I8D1</accession>
<gene>
    <name evidence="1" type="primary">rpsN</name>
    <name evidence="1" type="synonym">rps14</name>
    <name type="ordered locus">sync_2089</name>
</gene>
<protein>
    <recommendedName>
        <fullName evidence="1">Small ribosomal subunit protein uS14</fullName>
    </recommendedName>
    <alternativeName>
        <fullName evidence="2">30S ribosomal protein S14</fullName>
    </alternativeName>
</protein>